<gene>
    <name evidence="1" type="primary">rpsT</name>
    <name type="ordered locus">ACICU_01644</name>
</gene>
<dbReference type="EMBL" id="CP000863">
    <property type="protein sequence ID" value="ACC56956.1"/>
    <property type="molecule type" value="Genomic_DNA"/>
</dbReference>
<dbReference type="RefSeq" id="WP_000013652.1">
    <property type="nucleotide sequence ID" value="NZ_CP031380.1"/>
</dbReference>
<dbReference type="SMR" id="B2HZH0"/>
<dbReference type="GeneID" id="92893827"/>
<dbReference type="KEGG" id="abc:ACICU_01644"/>
<dbReference type="HOGENOM" id="CLU_160655_4_0_6"/>
<dbReference type="Proteomes" id="UP000008839">
    <property type="component" value="Chromosome"/>
</dbReference>
<dbReference type="GO" id="GO:0005829">
    <property type="term" value="C:cytosol"/>
    <property type="evidence" value="ECO:0007669"/>
    <property type="project" value="TreeGrafter"/>
</dbReference>
<dbReference type="GO" id="GO:0015935">
    <property type="term" value="C:small ribosomal subunit"/>
    <property type="evidence" value="ECO:0007669"/>
    <property type="project" value="TreeGrafter"/>
</dbReference>
<dbReference type="GO" id="GO:0070181">
    <property type="term" value="F:small ribosomal subunit rRNA binding"/>
    <property type="evidence" value="ECO:0007669"/>
    <property type="project" value="TreeGrafter"/>
</dbReference>
<dbReference type="GO" id="GO:0003735">
    <property type="term" value="F:structural constituent of ribosome"/>
    <property type="evidence" value="ECO:0007669"/>
    <property type="project" value="InterPro"/>
</dbReference>
<dbReference type="GO" id="GO:0006412">
    <property type="term" value="P:translation"/>
    <property type="evidence" value="ECO:0007669"/>
    <property type="project" value="UniProtKB-UniRule"/>
</dbReference>
<dbReference type="FunFam" id="1.20.58.110:FF:000001">
    <property type="entry name" value="30S ribosomal protein S20"/>
    <property type="match status" value="1"/>
</dbReference>
<dbReference type="Gene3D" id="1.20.58.110">
    <property type="entry name" value="Ribosomal protein S20"/>
    <property type="match status" value="1"/>
</dbReference>
<dbReference type="HAMAP" id="MF_00500">
    <property type="entry name" value="Ribosomal_bS20"/>
    <property type="match status" value="1"/>
</dbReference>
<dbReference type="InterPro" id="IPR002583">
    <property type="entry name" value="Ribosomal_bS20"/>
</dbReference>
<dbReference type="InterPro" id="IPR036510">
    <property type="entry name" value="Ribosomal_bS20_sf"/>
</dbReference>
<dbReference type="NCBIfam" id="TIGR00029">
    <property type="entry name" value="S20"/>
    <property type="match status" value="1"/>
</dbReference>
<dbReference type="PANTHER" id="PTHR33398">
    <property type="entry name" value="30S RIBOSOMAL PROTEIN S20"/>
    <property type="match status" value="1"/>
</dbReference>
<dbReference type="PANTHER" id="PTHR33398:SF1">
    <property type="entry name" value="SMALL RIBOSOMAL SUBUNIT PROTEIN BS20C"/>
    <property type="match status" value="1"/>
</dbReference>
<dbReference type="Pfam" id="PF01649">
    <property type="entry name" value="Ribosomal_S20p"/>
    <property type="match status" value="1"/>
</dbReference>
<dbReference type="SUPFAM" id="SSF46992">
    <property type="entry name" value="Ribosomal protein S20"/>
    <property type="match status" value="1"/>
</dbReference>
<sequence length="88" mass="9699">MANSAQAKKRARQNVKARKHNASLRSMVRTYIKRTLSAIAGGDYAVATEAYKKAVPVIDRMADKGIIHKNKAARHKSRLNAQVKALAN</sequence>
<reference key="1">
    <citation type="journal article" date="2008" name="Antimicrob. Agents Chemother.">
        <title>Whole-genome pyrosequencing of an epidemic multidrug-resistant Acinetobacter baumannii strain belonging to the European clone II group.</title>
        <authorList>
            <person name="Iacono M."/>
            <person name="Villa L."/>
            <person name="Fortini D."/>
            <person name="Bordoni R."/>
            <person name="Imperi F."/>
            <person name="Bonnal R.J."/>
            <person name="Sicheritz-Ponten T."/>
            <person name="De Bellis G."/>
            <person name="Visca P."/>
            <person name="Cassone A."/>
            <person name="Carattoli A."/>
        </authorList>
    </citation>
    <scope>NUCLEOTIDE SEQUENCE [LARGE SCALE GENOMIC DNA]</scope>
    <source>
        <strain>ACICU</strain>
    </source>
</reference>
<comment type="function">
    <text evidence="1">Binds directly to 16S ribosomal RNA.</text>
</comment>
<comment type="similarity">
    <text evidence="1">Belongs to the bacterial ribosomal protein bS20 family.</text>
</comment>
<name>RS20_ACIBC</name>
<evidence type="ECO:0000255" key="1">
    <source>
        <dbReference type="HAMAP-Rule" id="MF_00500"/>
    </source>
</evidence>
<evidence type="ECO:0000256" key="2">
    <source>
        <dbReference type="SAM" id="MobiDB-lite"/>
    </source>
</evidence>
<evidence type="ECO:0000305" key="3"/>
<feature type="chain" id="PRO_1000126384" description="Small ribosomal subunit protein bS20">
    <location>
        <begin position="1"/>
        <end position="88"/>
    </location>
</feature>
<feature type="region of interest" description="Disordered" evidence="2">
    <location>
        <begin position="1"/>
        <end position="21"/>
    </location>
</feature>
<feature type="compositionally biased region" description="Basic residues" evidence="2">
    <location>
        <begin position="7"/>
        <end position="21"/>
    </location>
</feature>
<organism>
    <name type="scientific">Acinetobacter baumannii (strain ACICU)</name>
    <dbReference type="NCBI Taxonomy" id="405416"/>
    <lineage>
        <taxon>Bacteria</taxon>
        <taxon>Pseudomonadati</taxon>
        <taxon>Pseudomonadota</taxon>
        <taxon>Gammaproteobacteria</taxon>
        <taxon>Moraxellales</taxon>
        <taxon>Moraxellaceae</taxon>
        <taxon>Acinetobacter</taxon>
        <taxon>Acinetobacter calcoaceticus/baumannii complex</taxon>
    </lineage>
</organism>
<protein>
    <recommendedName>
        <fullName evidence="1">Small ribosomal subunit protein bS20</fullName>
    </recommendedName>
    <alternativeName>
        <fullName evidence="3">30S ribosomal protein S20</fullName>
    </alternativeName>
</protein>
<accession>B2HZH0</accession>
<keyword id="KW-0687">Ribonucleoprotein</keyword>
<keyword id="KW-0689">Ribosomal protein</keyword>
<keyword id="KW-0694">RNA-binding</keyword>
<keyword id="KW-0699">rRNA-binding</keyword>
<proteinExistence type="inferred from homology"/>